<sequence>MQKYDIKTFQGMILALQDYWAQNGCTIVQPLDMEVGAGTSHPMTCLRALGPEPMSTAYVQPSRRPTDGRYGENPNRLQHYYQFQVALKPSPDNIQELYLGSLEVLGIDPLVHDIRFVEDNWENPTLGAWGLGWEIWLNGMEVTQFTYFQQVGGLECKPVTGEITYGIERLAMYIQEVDSVYDLVWNIGPDGTAVTYGDIFHQNEVEQSTYNFEHADVDFLFGFFDQCEKESKELLELEKPLPLPAYERILKAAHAFNLLDARKAISVTERQRYILRIRNLTKAVAEAYYASREALGFPMCKKNEEK</sequence>
<proteinExistence type="inferred from homology"/>
<organism>
    <name type="scientific">Aliivibrio fischeri (strain ATCC 700601 / ES114)</name>
    <name type="common">Vibrio fischeri</name>
    <dbReference type="NCBI Taxonomy" id="312309"/>
    <lineage>
        <taxon>Bacteria</taxon>
        <taxon>Pseudomonadati</taxon>
        <taxon>Pseudomonadota</taxon>
        <taxon>Gammaproteobacteria</taxon>
        <taxon>Vibrionales</taxon>
        <taxon>Vibrionaceae</taxon>
        <taxon>Aliivibrio</taxon>
    </lineage>
</organism>
<reference key="1">
    <citation type="journal article" date="2005" name="Proc. Natl. Acad. Sci. U.S.A.">
        <title>Complete genome sequence of Vibrio fischeri: a symbiotic bacterium with pathogenic congeners.</title>
        <authorList>
            <person name="Ruby E.G."/>
            <person name="Urbanowski M."/>
            <person name="Campbell J."/>
            <person name="Dunn A."/>
            <person name="Faini M."/>
            <person name="Gunsalus R."/>
            <person name="Lostroh P."/>
            <person name="Lupp C."/>
            <person name="McCann J."/>
            <person name="Millikan D."/>
            <person name="Schaefer A."/>
            <person name="Stabb E."/>
            <person name="Stevens A."/>
            <person name="Visick K."/>
            <person name="Whistler C."/>
            <person name="Greenberg E.P."/>
        </authorList>
    </citation>
    <scope>NUCLEOTIDE SEQUENCE [LARGE SCALE GENOMIC DNA]</scope>
    <source>
        <strain>ATCC 700601 / ES114</strain>
    </source>
</reference>
<dbReference type="EC" id="6.1.1.14" evidence="1"/>
<dbReference type="EMBL" id="CP000020">
    <property type="protein sequence ID" value="AAW84510.1"/>
    <property type="molecule type" value="Genomic_DNA"/>
</dbReference>
<dbReference type="RefSeq" id="WP_005416792.1">
    <property type="nucleotide sequence ID" value="NZ_CAWLES010000001.1"/>
</dbReference>
<dbReference type="RefSeq" id="YP_203398.1">
    <property type="nucleotide sequence ID" value="NC_006840.2"/>
</dbReference>
<dbReference type="SMR" id="Q5E8Y6"/>
<dbReference type="STRING" id="312309.VF_0015"/>
<dbReference type="EnsemblBacteria" id="AAW84510">
    <property type="protein sequence ID" value="AAW84510"/>
    <property type="gene ID" value="VF_0015"/>
</dbReference>
<dbReference type="GeneID" id="54162644"/>
<dbReference type="KEGG" id="vfi:VF_0015"/>
<dbReference type="PATRIC" id="fig|312309.11.peg.16"/>
<dbReference type="eggNOG" id="COG0752">
    <property type="taxonomic scope" value="Bacteria"/>
</dbReference>
<dbReference type="HOGENOM" id="CLU_057066_1_0_6"/>
<dbReference type="OrthoDB" id="9802183at2"/>
<dbReference type="Proteomes" id="UP000000537">
    <property type="component" value="Chromosome I"/>
</dbReference>
<dbReference type="GO" id="GO:0005829">
    <property type="term" value="C:cytosol"/>
    <property type="evidence" value="ECO:0007669"/>
    <property type="project" value="TreeGrafter"/>
</dbReference>
<dbReference type="GO" id="GO:0005524">
    <property type="term" value="F:ATP binding"/>
    <property type="evidence" value="ECO:0007669"/>
    <property type="project" value="UniProtKB-UniRule"/>
</dbReference>
<dbReference type="GO" id="GO:0004820">
    <property type="term" value="F:glycine-tRNA ligase activity"/>
    <property type="evidence" value="ECO:0007669"/>
    <property type="project" value="UniProtKB-UniRule"/>
</dbReference>
<dbReference type="GO" id="GO:0006426">
    <property type="term" value="P:glycyl-tRNA aminoacylation"/>
    <property type="evidence" value="ECO:0007669"/>
    <property type="project" value="UniProtKB-UniRule"/>
</dbReference>
<dbReference type="CDD" id="cd00733">
    <property type="entry name" value="GlyRS_alpha_core"/>
    <property type="match status" value="1"/>
</dbReference>
<dbReference type="FunFam" id="3.30.930.10:FF:000006">
    <property type="entry name" value="Glycine--tRNA ligase alpha subunit"/>
    <property type="match status" value="1"/>
</dbReference>
<dbReference type="Gene3D" id="3.30.930.10">
    <property type="entry name" value="Bira Bifunctional Protein, Domain 2"/>
    <property type="match status" value="1"/>
</dbReference>
<dbReference type="Gene3D" id="1.20.58.180">
    <property type="entry name" value="Class II aaRS and biotin synthetases, domain 2"/>
    <property type="match status" value="1"/>
</dbReference>
<dbReference type="HAMAP" id="MF_00254">
    <property type="entry name" value="Gly_tRNA_synth_alpha"/>
    <property type="match status" value="1"/>
</dbReference>
<dbReference type="InterPro" id="IPR045864">
    <property type="entry name" value="aa-tRNA-synth_II/BPL/LPL"/>
</dbReference>
<dbReference type="InterPro" id="IPR006194">
    <property type="entry name" value="Gly-tRNA-synth_heterodimer"/>
</dbReference>
<dbReference type="InterPro" id="IPR002310">
    <property type="entry name" value="Gly-tRNA_ligase_asu"/>
</dbReference>
<dbReference type="NCBIfam" id="TIGR00388">
    <property type="entry name" value="glyQ"/>
    <property type="match status" value="1"/>
</dbReference>
<dbReference type="NCBIfam" id="NF006827">
    <property type="entry name" value="PRK09348.1"/>
    <property type="match status" value="1"/>
</dbReference>
<dbReference type="PANTHER" id="PTHR30075:SF2">
    <property type="entry name" value="GLYCINE--TRNA LIGASE, CHLOROPLASTIC_MITOCHONDRIAL 2"/>
    <property type="match status" value="1"/>
</dbReference>
<dbReference type="PANTHER" id="PTHR30075">
    <property type="entry name" value="GLYCYL-TRNA SYNTHETASE"/>
    <property type="match status" value="1"/>
</dbReference>
<dbReference type="Pfam" id="PF02091">
    <property type="entry name" value="tRNA-synt_2e"/>
    <property type="match status" value="1"/>
</dbReference>
<dbReference type="PRINTS" id="PR01044">
    <property type="entry name" value="TRNASYNTHGA"/>
</dbReference>
<dbReference type="SUPFAM" id="SSF55681">
    <property type="entry name" value="Class II aaRS and biotin synthetases"/>
    <property type="match status" value="1"/>
</dbReference>
<dbReference type="PROSITE" id="PS50861">
    <property type="entry name" value="AA_TRNA_LIGASE_II_GLYAB"/>
    <property type="match status" value="1"/>
</dbReference>
<feature type="chain" id="PRO_1000047526" description="Glycine--tRNA ligase alpha subunit">
    <location>
        <begin position="1"/>
        <end position="306"/>
    </location>
</feature>
<accession>Q5E8Y6</accession>
<protein>
    <recommendedName>
        <fullName evidence="1">Glycine--tRNA ligase alpha subunit</fullName>
        <ecNumber evidence="1">6.1.1.14</ecNumber>
    </recommendedName>
    <alternativeName>
        <fullName evidence="1">Glycyl-tRNA synthetase alpha subunit</fullName>
        <shortName evidence="1">GlyRS</shortName>
    </alternativeName>
</protein>
<comment type="catalytic activity">
    <reaction evidence="1">
        <text>tRNA(Gly) + glycine + ATP = glycyl-tRNA(Gly) + AMP + diphosphate</text>
        <dbReference type="Rhea" id="RHEA:16013"/>
        <dbReference type="Rhea" id="RHEA-COMP:9664"/>
        <dbReference type="Rhea" id="RHEA-COMP:9683"/>
        <dbReference type="ChEBI" id="CHEBI:30616"/>
        <dbReference type="ChEBI" id="CHEBI:33019"/>
        <dbReference type="ChEBI" id="CHEBI:57305"/>
        <dbReference type="ChEBI" id="CHEBI:78442"/>
        <dbReference type="ChEBI" id="CHEBI:78522"/>
        <dbReference type="ChEBI" id="CHEBI:456215"/>
        <dbReference type="EC" id="6.1.1.14"/>
    </reaction>
</comment>
<comment type="subunit">
    <text evidence="1">Tetramer of two alpha and two beta subunits.</text>
</comment>
<comment type="subcellular location">
    <subcellularLocation>
        <location evidence="1">Cytoplasm</location>
    </subcellularLocation>
</comment>
<comment type="similarity">
    <text evidence="1">Belongs to the class-II aminoacyl-tRNA synthetase family.</text>
</comment>
<keyword id="KW-0030">Aminoacyl-tRNA synthetase</keyword>
<keyword id="KW-0067">ATP-binding</keyword>
<keyword id="KW-0963">Cytoplasm</keyword>
<keyword id="KW-0436">Ligase</keyword>
<keyword id="KW-0547">Nucleotide-binding</keyword>
<keyword id="KW-0648">Protein biosynthesis</keyword>
<keyword id="KW-1185">Reference proteome</keyword>
<gene>
    <name evidence="1" type="primary">glyQ</name>
    <name type="ordered locus">VF_0015</name>
</gene>
<evidence type="ECO:0000255" key="1">
    <source>
        <dbReference type="HAMAP-Rule" id="MF_00254"/>
    </source>
</evidence>
<name>SYGA_ALIF1</name>